<organism>
    <name type="scientific">Arabidopsis thaliana</name>
    <name type="common">Mouse-ear cress</name>
    <dbReference type="NCBI Taxonomy" id="3702"/>
    <lineage>
        <taxon>Eukaryota</taxon>
        <taxon>Viridiplantae</taxon>
        <taxon>Streptophyta</taxon>
        <taxon>Embryophyta</taxon>
        <taxon>Tracheophyta</taxon>
        <taxon>Spermatophyta</taxon>
        <taxon>Magnoliopsida</taxon>
        <taxon>eudicotyledons</taxon>
        <taxon>Gunneridae</taxon>
        <taxon>Pentapetalae</taxon>
        <taxon>rosids</taxon>
        <taxon>malvids</taxon>
        <taxon>Brassicales</taxon>
        <taxon>Brassicaceae</taxon>
        <taxon>Camelineae</taxon>
        <taxon>Arabidopsis</taxon>
    </lineage>
</organism>
<comment type="function">
    <text evidence="1">CIPK serine-threonine protein kinases interact with CBL proteins. Binding of a CBL protein to the regulatory NAF domain of CIPK protein lead to the activation of the kinase in a calcium-dependent manner (By similarity).</text>
</comment>
<comment type="catalytic activity">
    <reaction>
        <text>L-seryl-[protein] + ATP = O-phospho-L-seryl-[protein] + ADP + H(+)</text>
        <dbReference type="Rhea" id="RHEA:17989"/>
        <dbReference type="Rhea" id="RHEA-COMP:9863"/>
        <dbReference type="Rhea" id="RHEA-COMP:11604"/>
        <dbReference type="ChEBI" id="CHEBI:15378"/>
        <dbReference type="ChEBI" id="CHEBI:29999"/>
        <dbReference type="ChEBI" id="CHEBI:30616"/>
        <dbReference type="ChEBI" id="CHEBI:83421"/>
        <dbReference type="ChEBI" id="CHEBI:456216"/>
        <dbReference type="EC" id="2.7.11.1"/>
    </reaction>
</comment>
<comment type="catalytic activity">
    <reaction>
        <text>L-threonyl-[protein] + ATP = O-phospho-L-threonyl-[protein] + ADP + H(+)</text>
        <dbReference type="Rhea" id="RHEA:46608"/>
        <dbReference type="Rhea" id="RHEA-COMP:11060"/>
        <dbReference type="Rhea" id="RHEA-COMP:11605"/>
        <dbReference type="ChEBI" id="CHEBI:15378"/>
        <dbReference type="ChEBI" id="CHEBI:30013"/>
        <dbReference type="ChEBI" id="CHEBI:30616"/>
        <dbReference type="ChEBI" id="CHEBI:61977"/>
        <dbReference type="ChEBI" id="CHEBI:456216"/>
        <dbReference type="EC" id="2.7.11.1"/>
    </reaction>
</comment>
<comment type="cofactor">
    <cofactor evidence="1">
        <name>Mn(2+)</name>
        <dbReference type="ChEBI" id="CHEBI:29035"/>
    </cofactor>
</comment>
<comment type="subunit">
    <text evidence="7">Interacts with CBL1.</text>
</comment>
<comment type="domain">
    <text evidence="1">The activation loop within the kinase domain is the target of phosphorylation/activation by upstream protein kinases. The PPI motif mediates the interaction with the ABI (abscisic acid-insensitive) phosphatases (By similarity).</text>
</comment>
<comment type="similarity">
    <text evidence="8">Belongs to the protein kinase superfamily. CAMK Ser/Thr protein kinase family. SNF1 subfamily.</text>
</comment>
<comment type="sequence caution" evidence="8">
    <conflict type="erroneous gene model prediction">
        <sequence resource="EMBL-CDS" id="AAD49770"/>
    </conflict>
</comment>
<comment type="sequence caution" evidence="8">
    <conflict type="erroneous gene model prediction">
        <sequence resource="EMBL-CDS" id="AAF79514"/>
    </conflict>
</comment>
<proteinExistence type="evidence at protein level"/>
<evidence type="ECO:0000250" key="1"/>
<evidence type="ECO:0000250" key="2">
    <source>
        <dbReference type="UniProtKB" id="Q38997"/>
    </source>
</evidence>
<evidence type="ECO:0000250" key="3">
    <source>
        <dbReference type="UniProtKB" id="Q93V58"/>
    </source>
</evidence>
<evidence type="ECO:0000255" key="4">
    <source>
        <dbReference type="PROSITE-ProRule" id="PRU00159"/>
    </source>
</evidence>
<evidence type="ECO:0000255" key="5">
    <source>
        <dbReference type="PROSITE-ProRule" id="PRU00256"/>
    </source>
</evidence>
<evidence type="ECO:0000255" key="6">
    <source>
        <dbReference type="PROSITE-ProRule" id="PRU10027"/>
    </source>
</evidence>
<evidence type="ECO:0000269" key="7">
    <source>
    </source>
</evidence>
<evidence type="ECO:0000305" key="8"/>
<reference key="1">
    <citation type="submission" date="2001-05" db="EMBL/GenBank/DDBJ databases">
        <title>Molecular characterization of the CIPK gene family from Arabidopsis thaliana.</title>
        <authorList>
            <person name="Weinl S."/>
            <person name="Albrecht V."/>
            <person name="Kudla J."/>
        </authorList>
    </citation>
    <scope>NUCLEOTIDE SEQUENCE [MRNA]</scope>
</reference>
<reference key="2">
    <citation type="journal article" date="2000" name="Nature">
        <title>Sequence and analysis of chromosome 1 of the plant Arabidopsis thaliana.</title>
        <authorList>
            <person name="Theologis A."/>
            <person name="Ecker J.R."/>
            <person name="Palm C.J."/>
            <person name="Federspiel N.A."/>
            <person name="Kaul S."/>
            <person name="White O."/>
            <person name="Alonso J."/>
            <person name="Altafi H."/>
            <person name="Araujo R."/>
            <person name="Bowman C.L."/>
            <person name="Brooks S.Y."/>
            <person name="Buehler E."/>
            <person name="Chan A."/>
            <person name="Chao Q."/>
            <person name="Chen H."/>
            <person name="Cheuk R.F."/>
            <person name="Chin C.W."/>
            <person name="Chung M.K."/>
            <person name="Conn L."/>
            <person name="Conway A.B."/>
            <person name="Conway A.R."/>
            <person name="Creasy T.H."/>
            <person name="Dewar K."/>
            <person name="Dunn P."/>
            <person name="Etgu P."/>
            <person name="Feldblyum T.V."/>
            <person name="Feng J.-D."/>
            <person name="Fong B."/>
            <person name="Fujii C.Y."/>
            <person name="Gill J.E."/>
            <person name="Goldsmith A.D."/>
            <person name="Haas B."/>
            <person name="Hansen N.F."/>
            <person name="Hughes B."/>
            <person name="Huizar L."/>
            <person name="Hunter J.L."/>
            <person name="Jenkins J."/>
            <person name="Johnson-Hopson C."/>
            <person name="Khan S."/>
            <person name="Khaykin E."/>
            <person name="Kim C.J."/>
            <person name="Koo H.L."/>
            <person name="Kremenetskaia I."/>
            <person name="Kurtz D.B."/>
            <person name="Kwan A."/>
            <person name="Lam B."/>
            <person name="Langin-Hooper S."/>
            <person name="Lee A."/>
            <person name="Lee J.M."/>
            <person name="Lenz C.A."/>
            <person name="Li J.H."/>
            <person name="Li Y.-P."/>
            <person name="Lin X."/>
            <person name="Liu S.X."/>
            <person name="Liu Z.A."/>
            <person name="Luros J.S."/>
            <person name="Maiti R."/>
            <person name="Marziali A."/>
            <person name="Militscher J."/>
            <person name="Miranda M."/>
            <person name="Nguyen M."/>
            <person name="Nierman W.C."/>
            <person name="Osborne B.I."/>
            <person name="Pai G."/>
            <person name="Peterson J."/>
            <person name="Pham P.K."/>
            <person name="Rizzo M."/>
            <person name="Rooney T."/>
            <person name="Rowley D."/>
            <person name="Sakano H."/>
            <person name="Salzberg S.L."/>
            <person name="Schwartz J.R."/>
            <person name="Shinn P."/>
            <person name="Southwick A.M."/>
            <person name="Sun H."/>
            <person name="Tallon L.J."/>
            <person name="Tambunga G."/>
            <person name="Toriumi M.J."/>
            <person name="Town C.D."/>
            <person name="Utterback T."/>
            <person name="Van Aken S."/>
            <person name="Vaysberg M."/>
            <person name="Vysotskaia V.S."/>
            <person name="Walker M."/>
            <person name="Wu D."/>
            <person name="Yu G."/>
            <person name="Fraser C.M."/>
            <person name="Venter J.C."/>
            <person name="Davis R.W."/>
        </authorList>
    </citation>
    <scope>NUCLEOTIDE SEQUENCE [LARGE SCALE GENOMIC DNA]</scope>
    <source>
        <strain>cv. Columbia</strain>
    </source>
</reference>
<reference key="3">
    <citation type="journal article" date="2017" name="Plant J.">
        <title>Araport11: a complete reannotation of the Arabidopsis thaliana reference genome.</title>
        <authorList>
            <person name="Cheng C.Y."/>
            <person name="Krishnakumar V."/>
            <person name="Chan A.P."/>
            <person name="Thibaud-Nissen F."/>
            <person name="Schobel S."/>
            <person name="Town C.D."/>
        </authorList>
    </citation>
    <scope>GENOME REANNOTATION</scope>
    <source>
        <strain>cv. Columbia</strain>
    </source>
</reference>
<reference key="4">
    <citation type="submission" date="2006-10" db="EMBL/GenBank/DDBJ databases">
        <title>Arabidopsis ORF clones.</title>
        <authorList>
            <person name="Quinitio C."/>
            <person name="Chen H."/>
            <person name="Kim C.J."/>
            <person name="Shinn P."/>
            <person name="Ecker J.R."/>
        </authorList>
    </citation>
    <scope>NUCLEOTIDE SEQUENCE [LARGE SCALE MRNA]</scope>
    <source>
        <strain>cv. Columbia</strain>
    </source>
</reference>
<reference key="5">
    <citation type="journal article" date="2003" name="Plant Physiol.">
        <title>The Arabidopsis CDPK-SnRK superfamily of protein kinases.</title>
        <authorList>
            <person name="Hrabak E.M."/>
            <person name="Chan C.W.M."/>
            <person name="Gribskov M."/>
            <person name="Harper J.F."/>
            <person name="Choi J.H."/>
            <person name="Halford N."/>
            <person name="Kudla J."/>
            <person name="Luan S."/>
            <person name="Nimmo H.G."/>
            <person name="Sussman M.R."/>
            <person name="Thomas M."/>
            <person name="Walker-Simmons K."/>
            <person name="Zhu J.-K."/>
            <person name="Harmon A.C."/>
        </authorList>
    </citation>
    <scope>GENE FAMILY</scope>
    <scope>NOMENCLATURE</scope>
</reference>
<reference key="6">
    <citation type="journal article" date="2004" name="Plant Physiol.">
        <title>Calcium sensors and their interacting protein kinases: genomics of the Arabidopsis and rice CBL-CIPK signaling networks.</title>
        <authorList>
            <person name="Kolukisaoglu U."/>
            <person name="Weinl S."/>
            <person name="Blazevic D."/>
            <person name="Batistic O."/>
            <person name="Kudla J."/>
        </authorList>
    </citation>
    <scope>INTERACTION WITH CBL1</scope>
</reference>
<protein>
    <recommendedName>
        <fullName>CBL-interacting serine/threonine-protein kinase 17</fullName>
        <ecNumber>2.7.11.1</ecNumber>
    </recommendedName>
    <alternativeName>
        <fullName>SNF1-related kinase 3.21</fullName>
    </alternativeName>
    <alternativeName>
        <fullName>SOS2-like protein kinase PKS20</fullName>
    </alternativeName>
</protein>
<accession>Q94C40</accession>
<accession>Q9LNH7</accession>
<accession>Q9SX61</accession>
<gene>
    <name type="primary">CIPK17</name>
    <name type="synonym">PKS20</name>
    <name type="synonym">SnRK3.21</name>
    <name type="ordered locus">At1g48260</name>
    <name type="ORF">F11A17.18</name>
    <name type="ORF">F21D18.2</name>
</gene>
<keyword id="KW-0067">ATP-binding</keyword>
<keyword id="KW-0418">Kinase</keyword>
<keyword id="KW-0464">Manganese</keyword>
<keyword id="KW-0547">Nucleotide-binding</keyword>
<keyword id="KW-0597">Phosphoprotein</keyword>
<keyword id="KW-1185">Reference proteome</keyword>
<keyword id="KW-0723">Serine/threonine-protein kinase</keyword>
<keyword id="KW-0808">Transferase</keyword>
<dbReference type="EC" id="2.7.11.1"/>
<dbReference type="EMBL" id="AY036958">
    <property type="protein sequence ID" value="AAK64513.1"/>
    <property type="molecule type" value="mRNA"/>
</dbReference>
<dbReference type="EMBL" id="AC007932">
    <property type="protein sequence ID" value="AAD49770.2"/>
    <property type="status" value="ALT_SEQ"/>
    <property type="molecule type" value="Genomic_DNA"/>
</dbReference>
<dbReference type="EMBL" id="AC023673">
    <property type="protein sequence ID" value="AAF79514.1"/>
    <property type="status" value="ALT_SEQ"/>
    <property type="molecule type" value="Genomic_DNA"/>
</dbReference>
<dbReference type="EMBL" id="CP002684">
    <property type="protein sequence ID" value="AEE32269.1"/>
    <property type="molecule type" value="Genomic_DNA"/>
</dbReference>
<dbReference type="EMBL" id="BT029240">
    <property type="protein sequence ID" value="ABJ98572.1"/>
    <property type="molecule type" value="mRNA"/>
</dbReference>
<dbReference type="PIR" id="E96522">
    <property type="entry name" value="E96522"/>
</dbReference>
<dbReference type="RefSeq" id="NP_175260.1">
    <property type="nucleotide sequence ID" value="NM_103723.4"/>
</dbReference>
<dbReference type="SMR" id="Q94C40"/>
<dbReference type="BioGRID" id="26471">
    <property type="interactions" value="6"/>
</dbReference>
<dbReference type="FunCoup" id="Q94C40">
    <property type="interactions" value="1257"/>
</dbReference>
<dbReference type="IntAct" id="Q94C40">
    <property type="interactions" value="4"/>
</dbReference>
<dbReference type="STRING" id="3702.Q94C40"/>
<dbReference type="PaxDb" id="3702-AT1G48260.1"/>
<dbReference type="EnsemblPlants" id="AT1G48260.1">
    <property type="protein sequence ID" value="AT1G48260.1"/>
    <property type="gene ID" value="AT1G48260"/>
</dbReference>
<dbReference type="GeneID" id="841246"/>
<dbReference type="Gramene" id="AT1G48260.1">
    <property type="protein sequence ID" value="AT1G48260.1"/>
    <property type="gene ID" value="AT1G48260"/>
</dbReference>
<dbReference type="KEGG" id="ath:AT1G48260"/>
<dbReference type="Araport" id="AT1G48260"/>
<dbReference type="TAIR" id="AT1G48260">
    <property type="gene designation" value="CIPK17"/>
</dbReference>
<dbReference type="eggNOG" id="KOG0583">
    <property type="taxonomic scope" value="Eukaryota"/>
</dbReference>
<dbReference type="HOGENOM" id="CLU_000288_59_0_1"/>
<dbReference type="InParanoid" id="Q94C40"/>
<dbReference type="PhylomeDB" id="Q94C40"/>
<dbReference type="PRO" id="PR:Q94C40"/>
<dbReference type="Proteomes" id="UP000006548">
    <property type="component" value="Chromosome 1"/>
</dbReference>
<dbReference type="ExpressionAtlas" id="Q94C40">
    <property type="expression patterns" value="baseline and differential"/>
</dbReference>
<dbReference type="GO" id="GO:0005524">
    <property type="term" value="F:ATP binding"/>
    <property type="evidence" value="ECO:0007669"/>
    <property type="project" value="UniProtKB-KW"/>
</dbReference>
<dbReference type="GO" id="GO:0106310">
    <property type="term" value="F:protein serine kinase activity"/>
    <property type="evidence" value="ECO:0007669"/>
    <property type="project" value="RHEA"/>
</dbReference>
<dbReference type="GO" id="GO:0004674">
    <property type="term" value="F:protein serine/threonine kinase activity"/>
    <property type="evidence" value="ECO:0007669"/>
    <property type="project" value="UniProtKB-KW"/>
</dbReference>
<dbReference type="GO" id="GO:0007165">
    <property type="term" value="P:signal transduction"/>
    <property type="evidence" value="ECO:0007669"/>
    <property type="project" value="InterPro"/>
</dbReference>
<dbReference type="CDD" id="cd12195">
    <property type="entry name" value="CIPK_C"/>
    <property type="match status" value="1"/>
</dbReference>
<dbReference type="FunFam" id="1.10.510.10:FF:000279">
    <property type="entry name" value="Non-specific serine/threonine protein kinase"/>
    <property type="match status" value="1"/>
</dbReference>
<dbReference type="FunFam" id="3.30.200.20:FF:000096">
    <property type="entry name" value="Non-specific serine/threonine protein kinase"/>
    <property type="match status" value="1"/>
</dbReference>
<dbReference type="FunFam" id="3.30.310.80:FF:000015">
    <property type="entry name" value="Non-specific serine/threonine protein kinase"/>
    <property type="match status" value="1"/>
</dbReference>
<dbReference type="Gene3D" id="3.30.310.80">
    <property type="entry name" value="Kinase associated domain 1, KA1"/>
    <property type="match status" value="1"/>
</dbReference>
<dbReference type="Gene3D" id="3.30.200.20">
    <property type="entry name" value="Phosphorylase Kinase, domain 1"/>
    <property type="match status" value="1"/>
</dbReference>
<dbReference type="Gene3D" id="1.10.510.10">
    <property type="entry name" value="Transferase(Phosphotransferase) domain 1"/>
    <property type="match status" value="1"/>
</dbReference>
<dbReference type="InterPro" id="IPR011009">
    <property type="entry name" value="Kinase-like_dom_sf"/>
</dbReference>
<dbReference type="InterPro" id="IPR018451">
    <property type="entry name" value="NAF/FISL_domain"/>
</dbReference>
<dbReference type="InterPro" id="IPR004041">
    <property type="entry name" value="NAF_dom"/>
</dbReference>
<dbReference type="InterPro" id="IPR000719">
    <property type="entry name" value="Prot_kinase_dom"/>
</dbReference>
<dbReference type="InterPro" id="IPR017441">
    <property type="entry name" value="Protein_kinase_ATP_BS"/>
</dbReference>
<dbReference type="InterPro" id="IPR008271">
    <property type="entry name" value="Ser/Thr_kinase_AS"/>
</dbReference>
<dbReference type="PANTHER" id="PTHR43895">
    <property type="entry name" value="CALCIUM/CALMODULIN-DEPENDENT PROTEIN KINASE KINASE-RELATED"/>
    <property type="match status" value="1"/>
</dbReference>
<dbReference type="PANTHER" id="PTHR43895:SF65">
    <property type="entry name" value="CBL-INTERACTING PROTEIN KINASE 21"/>
    <property type="match status" value="1"/>
</dbReference>
<dbReference type="Pfam" id="PF03822">
    <property type="entry name" value="NAF"/>
    <property type="match status" value="1"/>
</dbReference>
<dbReference type="Pfam" id="PF00069">
    <property type="entry name" value="Pkinase"/>
    <property type="match status" value="1"/>
</dbReference>
<dbReference type="SMART" id="SM00220">
    <property type="entry name" value="S_TKc"/>
    <property type="match status" value="1"/>
</dbReference>
<dbReference type="SUPFAM" id="SSF56112">
    <property type="entry name" value="Protein kinase-like (PK-like)"/>
    <property type="match status" value="1"/>
</dbReference>
<dbReference type="PROSITE" id="PS50816">
    <property type="entry name" value="NAF"/>
    <property type="match status" value="1"/>
</dbReference>
<dbReference type="PROSITE" id="PS00107">
    <property type="entry name" value="PROTEIN_KINASE_ATP"/>
    <property type="match status" value="1"/>
</dbReference>
<dbReference type="PROSITE" id="PS50011">
    <property type="entry name" value="PROTEIN_KINASE_DOM"/>
    <property type="match status" value="1"/>
</dbReference>
<dbReference type="PROSITE" id="PS00108">
    <property type="entry name" value="PROTEIN_KINASE_ST"/>
    <property type="match status" value="1"/>
</dbReference>
<name>CIPKH_ARATH</name>
<feature type="chain" id="PRO_0000337218" description="CBL-interacting serine/threonine-protein kinase 17">
    <location>
        <begin position="1"/>
        <end position="432"/>
    </location>
</feature>
<feature type="domain" description="Protein kinase" evidence="4">
    <location>
        <begin position="11"/>
        <end position="266"/>
    </location>
</feature>
<feature type="domain" description="NAF" evidence="5">
    <location>
        <begin position="301"/>
        <end position="325"/>
    </location>
</feature>
<feature type="region of interest" description="Activation loop" evidence="1">
    <location>
        <begin position="152"/>
        <end position="181"/>
    </location>
</feature>
<feature type="region of interest" description="PPI" evidence="1">
    <location>
        <begin position="331"/>
        <end position="360"/>
    </location>
</feature>
<feature type="active site" description="Proton acceptor" evidence="4 6">
    <location>
        <position position="134"/>
    </location>
</feature>
<feature type="binding site" evidence="4">
    <location>
        <begin position="17"/>
        <end position="25"/>
    </location>
    <ligand>
        <name>ATP</name>
        <dbReference type="ChEBI" id="CHEBI:30616"/>
    </ligand>
</feature>
<feature type="binding site" evidence="4">
    <location>
        <position position="40"/>
    </location>
    <ligand>
        <name>ATP</name>
        <dbReference type="ChEBI" id="CHEBI:30616"/>
    </ligand>
</feature>
<feature type="modified residue" description="Phosphoserine" evidence="3">
    <location>
        <position position="156"/>
    </location>
</feature>
<feature type="modified residue" description="Phosphothreonine" evidence="2">
    <location>
        <position position="170"/>
    </location>
</feature>
<sequence>MVIKGMRVGKYELGRTLGEGNSAKVKFAIDTLTGESFAIKIIEKSCITRLNVSFQIKREIRTLKVLKHPNIVRLHEVLASKTKIYMVLECVTGGDLFDRIVSKGKLSETQGRKMFQQLIDGVSYCHNKGVFHRDLKLENVLLDAKGHIKITDFGLSALSQHYREDGLLHTTCGSPNYVAPEVLANEGYDGAASDIWSCGVILYVILTGCLPFDDANLAVICRKIFKGDPPIPRWISLGAKTMIKRMLDPNPVTRVTIAGIKAHDWFKHDYTPSNYDDDDDVYLIQEDVFMMKEYEEEKSPDSPTIINAFQLIGMSSFLDLSGFFETEKLSERQIRFTSNSLAKDLLENIETIFTEMGFCLQKKHAKLKAIKEESTQKRQCGLSVTAEVFEISPSLNVVELRKSHGDSSLYKQLYERLLNELGSSSQVQELLA</sequence>